<protein>
    <recommendedName>
        <fullName evidence="1">Ribosomal RNA large subunit methyltransferase M</fullName>
        <ecNumber evidence="1">2.1.1.186</ecNumber>
    </recommendedName>
    <alternativeName>
        <fullName evidence="1">23S rRNA (cytidine2498-2'-O)-methyltransferase</fullName>
    </alternativeName>
    <alternativeName>
        <fullName evidence="1">23S rRNA 2'-O-ribose methyltransferase RlmM</fullName>
    </alternativeName>
</protein>
<feature type="chain" id="PRO_1000201527" description="Ribosomal RNA large subunit methyltransferase M">
    <location>
        <begin position="1"/>
        <end position="366"/>
    </location>
</feature>
<feature type="active site" description="Proton acceptor" evidence="1">
    <location>
        <position position="306"/>
    </location>
</feature>
<feature type="binding site" evidence="1">
    <location>
        <position position="188"/>
    </location>
    <ligand>
        <name>S-adenosyl-L-methionine</name>
        <dbReference type="ChEBI" id="CHEBI:59789"/>
    </ligand>
</feature>
<feature type="binding site" evidence="1">
    <location>
        <begin position="221"/>
        <end position="224"/>
    </location>
    <ligand>
        <name>S-adenosyl-L-methionine</name>
        <dbReference type="ChEBI" id="CHEBI:59789"/>
    </ligand>
</feature>
<feature type="binding site" evidence="1">
    <location>
        <position position="240"/>
    </location>
    <ligand>
        <name>S-adenosyl-L-methionine</name>
        <dbReference type="ChEBI" id="CHEBI:59789"/>
    </ligand>
</feature>
<feature type="binding site" evidence="1">
    <location>
        <position position="260"/>
    </location>
    <ligand>
        <name>S-adenosyl-L-methionine</name>
        <dbReference type="ChEBI" id="CHEBI:59789"/>
    </ligand>
</feature>
<feature type="binding site" evidence="1">
    <location>
        <position position="277"/>
    </location>
    <ligand>
        <name>S-adenosyl-L-methionine</name>
        <dbReference type="ChEBI" id="CHEBI:59789"/>
    </ligand>
</feature>
<keyword id="KW-0963">Cytoplasm</keyword>
<keyword id="KW-0489">Methyltransferase</keyword>
<keyword id="KW-0698">rRNA processing</keyword>
<keyword id="KW-0949">S-adenosyl-L-methionine</keyword>
<keyword id="KW-0808">Transferase</keyword>
<sequence>MNKVVLLCRPGFEKECAAEITDKAGKREIFGFARVKENAGYVIYECYQPEDGEKLISELPFSSLIFARQWFVVGELLQHLPPEDRITPIVGMLQGVVEKGGELRVEVADTNESKELMKFCRKFTVPLRAALRDAGVLTNYETPKRPVVHVFFIAPGCCYTGYSFAHNNSPFYMGIPRLKFPSDAPSRSTLKLEEALHVFIPEDEWDERLANGMYAVDLGACPGGWTYQLVKRNMWVYSVDNGPMAQSLMDTGQVTWLREDGFRYRPNRNNISWMVCDMVEKPAKVTALMAQWLVNGWCRETIFNLKLPMKKRYEEVSHNLAYLQAQLDEHGVNAQIQARQLYHDREEVTVHVRRLWAAVGGRRDER</sequence>
<gene>
    <name evidence="1" type="primary">rlmM</name>
    <name type="ordered locus">SEN2824</name>
</gene>
<dbReference type="EC" id="2.1.1.186" evidence="1"/>
<dbReference type="EMBL" id="AM933172">
    <property type="protein sequence ID" value="CAR34403.1"/>
    <property type="molecule type" value="Genomic_DNA"/>
</dbReference>
<dbReference type="RefSeq" id="WP_001045494.1">
    <property type="nucleotide sequence ID" value="NC_011294.1"/>
</dbReference>
<dbReference type="SMR" id="B5QWR4"/>
<dbReference type="KEGG" id="set:SEN2824"/>
<dbReference type="HOGENOM" id="CLU_043780_0_0_6"/>
<dbReference type="Proteomes" id="UP000000613">
    <property type="component" value="Chromosome"/>
</dbReference>
<dbReference type="GO" id="GO:0005737">
    <property type="term" value="C:cytoplasm"/>
    <property type="evidence" value="ECO:0007669"/>
    <property type="project" value="UniProtKB-SubCell"/>
</dbReference>
<dbReference type="GO" id="GO:0008757">
    <property type="term" value="F:S-adenosylmethionine-dependent methyltransferase activity"/>
    <property type="evidence" value="ECO:0007669"/>
    <property type="project" value="UniProtKB-UniRule"/>
</dbReference>
<dbReference type="GO" id="GO:0032259">
    <property type="term" value="P:methylation"/>
    <property type="evidence" value="ECO:0007669"/>
    <property type="project" value="UniProtKB-KW"/>
</dbReference>
<dbReference type="GO" id="GO:0006364">
    <property type="term" value="P:rRNA processing"/>
    <property type="evidence" value="ECO:0007669"/>
    <property type="project" value="UniProtKB-UniRule"/>
</dbReference>
<dbReference type="FunFam" id="3.30.2300.20:FF:000001">
    <property type="entry name" value="Ribosomal RNA large subunit methyltransferase M"/>
    <property type="match status" value="1"/>
</dbReference>
<dbReference type="FunFam" id="3.30.70.2810:FF:000001">
    <property type="entry name" value="Ribosomal RNA large subunit methyltransferase M"/>
    <property type="match status" value="1"/>
</dbReference>
<dbReference type="FunFam" id="3.40.50.150:FF:000020">
    <property type="entry name" value="Ribosomal RNA large subunit methyltransferase M"/>
    <property type="match status" value="1"/>
</dbReference>
<dbReference type="Gene3D" id="3.30.2300.20">
    <property type="match status" value="1"/>
</dbReference>
<dbReference type="Gene3D" id="3.30.70.2810">
    <property type="match status" value="1"/>
</dbReference>
<dbReference type="Gene3D" id="3.40.50.150">
    <property type="entry name" value="Vaccinia Virus protein VP39"/>
    <property type="match status" value="1"/>
</dbReference>
<dbReference type="HAMAP" id="MF_01551">
    <property type="entry name" value="23SrRNA_methyltr_M"/>
    <property type="match status" value="1"/>
</dbReference>
<dbReference type="InterPro" id="IPR040739">
    <property type="entry name" value="RlmM_FDX"/>
</dbReference>
<dbReference type="InterPro" id="IPR048646">
    <property type="entry name" value="RlmM_THUMP-like"/>
</dbReference>
<dbReference type="InterPro" id="IPR002877">
    <property type="entry name" value="RNA_MeTrfase_FtsJ_dom"/>
</dbReference>
<dbReference type="InterPro" id="IPR011224">
    <property type="entry name" value="rRNA_MeTrfase_M"/>
</dbReference>
<dbReference type="InterPro" id="IPR029063">
    <property type="entry name" value="SAM-dependent_MTases_sf"/>
</dbReference>
<dbReference type="NCBIfam" id="NF008734">
    <property type="entry name" value="PRK11760.1"/>
    <property type="match status" value="1"/>
</dbReference>
<dbReference type="PANTHER" id="PTHR37524">
    <property type="entry name" value="RIBOSOMAL RNA LARGE SUBUNIT METHYLTRANSFERASE M"/>
    <property type="match status" value="1"/>
</dbReference>
<dbReference type="PANTHER" id="PTHR37524:SF2">
    <property type="entry name" value="RIBOSOMAL RNA METHYLTRANSFERASE FTSJ DOMAIN-CONTAINING PROTEIN"/>
    <property type="match status" value="1"/>
</dbReference>
<dbReference type="Pfam" id="PF01728">
    <property type="entry name" value="FtsJ"/>
    <property type="match status" value="1"/>
</dbReference>
<dbReference type="Pfam" id="PF18125">
    <property type="entry name" value="RlmM_FDX"/>
    <property type="match status" value="1"/>
</dbReference>
<dbReference type="Pfam" id="PF21239">
    <property type="entry name" value="RLMM_N"/>
    <property type="match status" value="1"/>
</dbReference>
<dbReference type="PIRSF" id="PIRSF028774">
    <property type="entry name" value="UCP028774"/>
    <property type="match status" value="1"/>
</dbReference>
<dbReference type="SUPFAM" id="SSF53335">
    <property type="entry name" value="S-adenosyl-L-methionine-dependent methyltransferases"/>
    <property type="match status" value="1"/>
</dbReference>
<name>RLMM_SALEP</name>
<reference key="1">
    <citation type="journal article" date="2008" name="Genome Res.">
        <title>Comparative genome analysis of Salmonella enteritidis PT4 and Salmonella gallinarum 287/91 provides insights into evolutionary and host adaptation pathways.</title>
        <authorList>
            <person name="Thomson N.R."/>
            <person name="Clayton D.J."/>
            <person name="Windhorst D."/>
            <person name="Vernikos G."/>
            <person name="Davidson S."/>
            <person name="Churcher C."/>
            <person name="Quail M.A."/>
            <person name="Stevens M."/>
            <person name="Jones M.A."/>
            <person name="Watson M."/>
            <person name="Barron A."/>
            <person name="Layton A."/>
            <person name="Pickard D."/>
            <person name="Kingsley R.A."/>
            <person name="Bignell A."/>
            <person name="Clark L."/>
            <person name="Harris B."/>
            <person name="Ormond D."/>
            <person name="Abdellah Z."/>
            <person name="Brooks K."/>
            <person name="Cherevach I."/>
            <person name="Chillingworth T."/>
            <person name="Woodward J."/>
            <person name="Norberczak H."/>
            <person name="Lord A."/>
            <person name="Arrowsmith C."/>
            <person name="Jagels K."/>
            <person name="Moule S."/>
            <person name="Mungall K."/>
            <person name="Saunders M."/>
            <person name="Whitehead S."/>
            <person name="Chabalgoity J.A."/>
            <person name="Maskell D."/>
            <person name="Humphreys T."/>
            <person name="Roberts M."/>
            <person name="Barrow P.A."/>
            <person name="Dougan G."/>
            <person name="Parkhill J."/>
        </authorList>
    </citation>
    <scope>NUCLEOTIDE SEQUENCE [LARGE SCALE GENOMIC DNA]</scope>
    <source>
        <strain>P125109</strain>
    </source>
</reference>
<evidence type="ECO:0000255" key="1">
    <source>
        <dbReference type="HAMAP-Rule" id="MF_01551"/>
    </source>
</evidence>
<proteinExistence type="inferred from homology"/>
<comment type="function">
    <text evidence="1">Catalyzes the 2'-O-methylation at nucleotide C2498 in 23S rRNA.</text>
</comment>
<comment type="catalytic activity">
    <reaction evidence="1">
        <text>cytidine(2498) in 23S rRNA + S-adenosyl-L-methionine = 2'-O-methylcytidine(2498) in 23S rRNA + S-adenosyl-L-homocysteine + H(+)</text>
        <dbReference type="Rhea" id="RHEA:42788"/>
        <dbReference type="Rhea" id="RHEA-COMP:10244"/>
        <dbReference type="Rhea" id="RHEA-COMP:10245"/>
        <dbReference type="ChEBI" id="CHEBI:15378"/>
        <dbReference type="ChEBI" id="CHEBI:57856"/>
        <dbReference type="ChEBI" id="CHEBI:59789"/>
        <dbReference type="ChEBI" id="CHEBI:74495"/>
        <dbReference type="ChEBI" id="CHEBI:82748"/>
        <dbReference type="EC" id="2.1.1.186"/>
    </reaction>
</comment>
<comment type="subunit">
    <text evidence="1">Monomer.</text>
</comment>
<comment type="subcellular location">
    <subcellularLocation>
        <location evidence="1">Cytoplasm</location>
    </subcellularLocation>
</comment>
<comment type="similarity">
    <text evidence="1">Belongs to the class I-like SAM-binding methyltransferase superfamily. RNA methyltransferase RlmE family. RlmM subfamily.</text>
</comment>
<accession>B5QWR4</accession>
<organism>
    <name type="scientific">Salmonella enteritidis PT4 (strain P125109)</name>
    <dbReference type="NCBI Taxonomy" id="550537"/>
    <lineage>
        <taxon>Bacteria</taxon>
        <taxon>Pseudomonadati</taxon>
        <taxon>Pseudomonadota</taxon>
        <taxon>Gammaproteobacteria</taxon>
        <taxon>Enterobacterales</taxon>
        <taxon>Enterobacteriaceae</taxon>
        <taxon>Salmonella</taxon>
    </lineage>
</organism>